<proteinExistence type="evidence at transcript level"/>
<accession>Q1LVS8</accession>
<accession>Q5U3R1</accession>
<protein>
    <recommendedName>
        <fullName>Putative transporter SVOPL</fullName>
    </recommendedName>
    <alternativeName>
        <fullName>SVOP-like protein</fullName>
    </alternativeName>
</protein>
<reference key="1">
    <citation type="journal article" date="2013" name="Nature">
        <title>The zebrafish reference genome sequence and its relationship to the human genome.</title>
        <authorList>
            <person name="Howe K."/>
            <person name="Clark M.D."/>
            <person name="Torroja C.F."/>
            <person name="Torrance J."/>
            <person name="Berthelot C."/>
            <person name="Muffato M."/>
            <person name="Collins J.E."/>
            <person name="Humphray S."/>
            <person name="McLaren K."/>
            <person name="Matthews L."/>
            <person name="McLaren S."/>
            <person name="Sealy I."/>
            <person name="Caccamo M."/>
            <person name="Churcher C."/>
            <person name="Scott C."/>
            <person name="Barrett J.C."/>
            <person name="Koch R."/>
            <person name="Rauch G.J."/>
            <person name="White S."/>
            <person name="Chow W."/>
            <person name="Kilian B."/>
            <person name="Quintais L.T."/>
            <person name="Guerra-Assuncao J.A."/>
            <person name="Zhou Y."/>
            <person name="Gu Y."/>
            <person name="Yen J."/>
            <person name="Vogel J.H."/>
            <person name="Eyre T."/>
            <person name="Redmond S."/>
            <person name="Banerjee R."/>
            <person name="Chi J."/>
            <person name="Fu B."/>
            <person name="Langley E."/>
            <person name="Maguire S.F."/>
            <person name="Laird G.K."/>
            <person name="Lloyd D."/>
            <person name="Kenyon E."/>
            <person name="Donaldson S."/>
            <person name="Sehra H."/>
            <person name="Almeida-King J."/>
            <person name="Loveland J."/>
            <person name="Trevanion S."/>
            <person name="Jones M."/>
            <person name="Quail M."/>
            <person name="Willey D."/>
            <person name="Hunt A."/>
            <person name="Burton J."/>
            <person name="Sims S."/>
            <person name="McLay K."/>
            <person name="Plumb B."/>
            <person name="Davis J."/>
            <person name="Clee C."/>
            <person name="Oliver K."/>
            <person name="Clark R."/>
            <person name="Riddle C."/>
            <person name="Elliot D."/>
            <person name="Threadgold G."/>
            <person name="Harden G."/>
            <person name="Ware D."/>
            <person name="Begum S."/>
            <person name="Mortimore B."/>
            <person name="Kerry G."/>
            <person name="Heath P."/>
            <person name="Phillimore B."/>
            <person name="Tracey A."/>
            <person name="Corby N."/>
            <person name="Dunn M."/>
            <person name="Johnson C."/>
            <person name="Wood J."/>
            <person name="Clark S."/>
            <person name="Pelan S."/>
            <person name="Griffiths G."/>
            <person name="Smith M."/>
            <person name="Glithero R."/>
            <person name="Howden P."/>
            <person name="Barker N."/>
            <person name="Lloyd C."/>
            <person name="Stevens C."/>
            <person name="Harley J."/>
            <person name="Holt K."/>
            <person name="Panagiotidis G."/>
            <person name="Lovell J."/>
            <person name="Beasley H."/>
            <person name="Henderson C."/>
            <person name="Gordon D."/>
            <person name="Auger K."/>
            <person name="Wright D."/>
            <person name="Collins J."/>
            <person name="Raisen C."/>
            <person name="Dyer L."/>
            <person name="Leung K."/>
            <person name="Robertson L."/>
            <person name="Ambridge K."/>
            <person name="Leongamornlert D."/>
            <person name="McGuire S."/>
            <person name="Gilderthorp R."/>
            <person name="Griffiths C."/>
            <person name="Manthravadi D."/>
            <person name="Nichol S."/>
            <person name="Barker G."/>
            <person name="Whitehead S."/>
            <person name="Kay M."/>
            <person name="Brown J."/>
            <person name="Murnane C."/>
            <person name="Gray E."/>
            <person name="Humphries M."/>
            <person name="Sycamore N."/>
            <person name="Barker D."/>
            <person name="Saunders D."/>
            <person name="Wallis J."/>
            <person name="Babbage A."/>
            <person name="Hammond S."/>
            <person name="Mashreghi-Mohammadi M."/>
            <person name="Barr L."/>
            <person name="Martin S."/>
            <person name="Wray P."/>
            <person name="Ellington A."/>
            <person name="Matthews N."/>
            <person name="Ellwood M."/>
            <person name="Woodmansey R."/>
            <person name="Clark G."/>
            <person name="Cooper J."/>
            <person name="Tromans A."/>
            <person name="Grafham D."/>
            <person name="Skuce C."/>
            <person name="Pandian R."/>
            <person name="Andrews R."/>
            <person name="Harrison E."/>
            <person name="Kimberley A."/>
            <person name="Garnett J."/>
            <person name="Fosker N."/>
            <person name="Hall R."/>
            <person name="Garner P."/>
            <person name="Kelly D."/>
            <person name="Bird C."/>
            <person name="Palmer S."/>
            <person name="Gehring I."/>
            <person name="Berger A."/>
            <person name="Dooley C.M."/>
            <person name="Ersan-Urun Z."/>
            <person name="Eser C."/>
            <person name="Geiger H."/>
            <person name="Geisler M."/>
            <person name="Karotki L."/>
            <person name="Kirn A."/>
            <person name="Konantz J."/>
            <person name="Konantz M."/>
            <person name="Oberlander M."/>
            <person name="Rudolph-Geiger S."/>
            <person name="Teucke M."/>
            <person name="Lanz C."/>
            <person name="Raddatz G."/>
            <person name="Osoegawa K."/>
            <person name="Zhu B."/>
            <person name="Rapp A."/>
            <person name="Widaa S."/>
            <person name="Langford C."/>
            <person name="Yang F."/>
            <person name="Schuster S.C."/>
            <person name="Carter N.P."/>
            <person name="Harrow J."/>
            <person name="Ning Z."/>
            <person name="Herrero J."/>
            <person name="Searle S.M."/>
            <person name="Enright A."/>
            <person name="Geisler R."/>
            <person name="Plasterk R.H."/>
            <person name="Lee C."/>
            <person name="Westerfield M."/>
            <person name="de Jong P.J."/>
            <person name="Zon L.I."/>
            <person name="Postlethwait J.H."/>
            <person name="Nusslein-Volhard C."/>
            <person name="Hubbard T.J."/>
            <person name="Roest Crollius H."/>
            <person name="Rogers J."/>
            <person name="Stemple D.L."/>
        </authorList>
    </citation>
    <scope>NUCLEOTIDE SEQUENCE [LARGE SCALE GENOMIC DNA]</scope>
    <source>
        <strain>Tuebingen</strain>
    </source>
</reference>
<reference key="2">
    <citation type="submission" date="2004-11" db="EMBL/GenBank/DDBJ databases">
        <authorList>
            <consortium name="NIH - Zebrafish Gene Collection (ZGC) project"/>
        </authorList>
    </citation>
    <scope>NUCLEOTIDE SEQUENCE [LARGE SCALE MRNA] OF 24-506</scope>
    <source>
        <tissue>Olfactory epithelium</tissue>
    </source>
</reference>
<keyword id="KW-0472">Membrane</keyword>
<keyword id="KW-1185">Reference proteome</keyword>
<keyword id="KW-0812">Transmembrane</keyword>
<keyword id="KW-1133">Transmembrane helix</keyword>
<keyword id="KW-0813">Transport</keyword>
<sequence>MALKRSSSMKTQLVDAIQLEEVEMEEEITTTSNNNNPVEPAQVKEPKCYTVEEAVESIGFGCFHILLFVIMGSANIVEAMEIMLLAVVSPEIRCEWHLEDWQVALVSTMVFFGFMVCGVLCGYIADKYGRWKVVFGGFVWASYFSFLTSFSTSYGWFIFLRCMVGCGVAATSQGFVLKTEFIPAKYRAYLLPLASIFWMMGSILIIVLGMTVVPTMGWRWMIRFSVIPSLVLIGLFMFIPESARFQVSAGNIQGAMSTLKRIAKMNNGVLPEGELREPEVTERGNAVTLISSAFRRTSLLLWYSWFVASFSYYGSVLSSSELLEKNLLCVTDPDLEHQIKHIQEETLCYCIPFNSDDYQTLLISCLGEVALIPLNIILLNIVGRKYSMVILLLLSAFFFMLVNICTTMLGFTILLFLLRSVVSMNFNVVYIYTAEVYPTSVRSIGMGFCTSFSRIGGMIAPFIAQVLMSKSVILALSPFATACIICAIGVFFLPIETRGRALLQDA</sequence>
<name>SVOPL_DANRE</name>
<comment type="subcellular location">
    <subcellularLocation>
        <location evidence="2">Membrane</location>
        <topology evidence="2">Multi-pass membrane protein</topology>
    </subcellularLocation>
</comment>
<comment type="similarity">
    <text evidence="2">Belongs to the major facilitator superfamily.</text>
</comment>
<comment type="sequence caution" evidence="2">
    <conflict type="erroneous initiation">
        <sequence resource="EMBL-CDS" id="AAH85429"/>
    </conflict>
</comment>
<evidence type="ECO:0000255" key="1"/>
<evidence type="ECO:0000305" key="2"/>
<organism>
    <name type="scientific">Danio rerio</name>
    <name type="common">Zebrafish</name>
    <name type="synonym">Brachydanio rerio</name>
    <dbReference type="NCBI Taxonomy" id="7955"/>
    <lineage>
        <taxon>Eukaryota</taxon>
        <taxon>Metazoa</taxon>
        <taxon>Chordata</taxon>
        <taxon>Craniata</taxon>
        <taxon>Vertebrata</taxon>
        <taxon>Euteleostomi</taxon>
        <taxon>Actinopterygii</taxon>
        <taxon>Neopterygii</taxon>
        <taxon>Teleostei</taxon>
        <taxon>Ostariophysi</taxon>
        <taxon>Cypriniformes</taxon>
        <taxon>Danionidae</taxon>
        <taxon>Danioninae</taxon>
        <taxon>Danio</taxon>
    </lineage>
</organism>
<gene>
    <name type="primary">svopl</name>
    <name type="ORF">si:dkeyp-27e10.2</name>
    <name type="ORF">zgc:101741</name>
</gene>
<dbReference type="EMBL" id="BX649444">
    <property type="protein sequence ID" value="CAK11366.1"/>
    <property type="molecule type" value="Genomic_DNA"/>
</dbReference>
<dbReference type="EMBL" id="BC085429">
    <property type="protein sequence ID" value="AAH85429.1"/>
    <property type="status" value="ALT_INIT"/>
    <property type="molecule type" value="mRNA"/>
</dbReference>
<dbReference type="RefSeq" id="NP_001007408.2">
    <property type="nucleotide sequence ID" value="NM_001007407.2"/>
</dbReference>
<dbReference type="RefSeq" id="NP_001038694.1">
    <property type="nucleotide sequence ID" value="NM_001045229.1"/>
</dbReference>
<dbReference type="RefSeq" id="XP_017210498.1">
    <property type="nucleotide sequence ID" value="XM_017355009.1"/>
</dbReference>
<dbReference type="RefSeq" id="XP_021330685.1">
    <property type="nucleotide sequence ID" value="XM_021475010.2"/>
</dbReference>
<dbReference type="RefSeq" id="XP_068075710.1">
    <property type="nucleotide sequence ID" value="XM_068219609.1"/>
</dbReference>
<dbReference type="SMR" id="Q1LVS8"/>
<dbReference type="FunCoup" id="Q1LVS8">
    <property type="interactions" value="19"/>
</dbReference>
<dbReference type="STRING" id="7955.ENSDARP00000075190"/>
<dbReference type="PaxDb" id="7955-ENSDARP00000075190"/>
<dbReference type="Ensembl" id="ENSDART00000080744">
    <property type="protein sequence ID" value="ENSDARP00000075190"/>
    <property type="gene ID" value="ENSDARG00000057983"/>
</dbReference>
<dbReference type="Ensembl" id="ENSDART00000150664">
    <property type="protein sequence ID" value="ENSDARP00000125241"/>
    <property type="gene ID" value="ENSDARG00000057983"/>
</dbReference>
<dbReference type="GeneID" id="492766"/>
<dbReference type="KEGG" id="dre:492766"/>
<dbReference type="AGR" id="ZFIN:ZDB-GENE-041114-109"/>
<dbReference type="CTD" id="136306"/>
<dbReference type="ZFIN" id="ZDB-GENE-041114-109">
    <property type="gene designation" value="svopl"/>
</dbReference>
<dbReference type="eggNOG" id="KOG0253">
    <property type="taxonomic scope" value="Eukaryota"/>
</dbReference>
<dbReference type="HOGENOM" id="CLU_001265_46_0_1"/>
<dbReference type="InParanoid" id="Q1LVS8"/>
<dbReference type="OMA" id="IGMFEVI"/>
<dbReference type="OrthoDB" id="4139357at2759"/>
<dbReference type="PhylomeDB" id="Q1LVS8"/>
<dbReference type="TreeFam" id="TF313465"/>
<dbReference type="PRO" id="PR:Q1LVS8"/>
<dbReference type="Proteomes" id="UP000000437">
    <property type="component" value="Alternate scaffold 4"/>
</dbReference>
<dbReference type="Proteomes" id="UP000000437">
    <property type="component" value="Chromosome 4"/>
</dbReference>
<dbReference type="Bgee" id="ENSDARG00000057983">
    <property type="expression patterns" value="Expressed in gastrula and 18 other cell types or tissues"/>
</dbReference>
<dbReference type="ExpressionAtlas" id="Q1LVS8">
    <property type="expression patterns" value="baseline and differential"/>
</dbReference>
<dbReference type="GO" id="GO:0016020">
    <property type="term" value="C:membrane"/>
    <property type="evidence" value="ECO:0007669"/>
    <property type="project" value="UniProtKB-SubCell"/>
</dbReference>
<dbReference type="GO" id="GO:0022857">
    <property type="term" value="F:transmembrane transporter activity"/>
    <property type="evidence" value="ECO:0007669"/>
    <property type="project" value="InterPro"/>
</dbReference>
<dbReference type="CDD" id="cd17442">
    <property type="entry name" value="MFS_SVOPL"/>
    <property type="match status" value="1"/>
</dbReference>
<dbReference type="Gene3D" id="1.20.1250.20">
    <property type="entry name" value="MFS general substrate transporter like domains"/>
    <property type="match status" value="1"/>
</dbReference>
<dbReference type="InterPro" id="IPR011701">
    <property type="entry name" value="MFS"/>
</dbReference>
<dbReference type="InterPro" id="IPR020846">
    <property type="entry name" value="MFS_dom"/>
</dbReference>
<dbReference type="InterPro" id="IPR005828">
    <property type="entry name" value="MFS_sugar_transport-like"/>
</dbReference>
<dbReference type="InterPro" id="IPR036259">
    <property type="entry name" value="MFS_trans_sf"/>
</dbReference>
<dbReference type="PANTHER" id="PTHR23511:SF45">
    <property type="entry name" value="SVOP LIKE"/>
    <property type="match status" value="1"/>
</dbReference>
<dbReference type="PANTHER" id="PTHR23511">
    <property type="entry name" value="SYNAPTIC VESICLE GLYCOPROTEIN 2"/>
    <property type="match status" value="1"/>
</dbReference>
<dbReference type="Pfam" id="PF07690">
    <property type="entry name" value="MFS_1"/>
    <property type="match status" value="1"/>
</dbReference>
<dbReference type="Pfam" id="PF00083">
    <property type="entry name" value="Sugar_tr"/>
    <property type="match status" value="1"/>
</dbReference>
<dbReference type="SUPFAM" id="SSF103473">
    <property type="entry name" value="MFS general substrate transporter"/>
    <property type="match status" value="1"/>
</dbReference>
<dbReference type="PROSITE" id="PS50850">
    <property type="entry name" value="MFS"/>
    <property type="match status" value="1"/>
</dbReference>
<feature type="chain" id="PRO_0000294463" description="Putative transporter SVOPL">
    <location>
        <begin position="1"/>
        <end position="506"/>
    </location>
</feature>
<feature type="transmembrane region" description="Helical" evidence="1">
    <location>
        <begin position="57"/>
        <end position="77"/>
    </location>
</feature>
<feature type="transmembrane region" description="Helical" evidence="1">
    <location>
        <begin position="104"/>
        <end position="124"/>
    </location>
</feature>
<feature type="transmembrane region" description="Helical" evidence="1">
    <location>
        <begin position="133"/>
        <end position="153"/>
    </location>
</feature>
<feature type="transmembrane region" description="Helical" evidence="1">
    <location>
        <begin position="190"/>
        <end position="210"/>
    </location>
</feature>
<feature type="transmembrane region" description="Helical" evidence="1">
    <location>
        <begin position="220"/>
        <end position="240"/>
    </location>
</feature>
<feature type="transmembrane region" description="Helical" evidence="1">
    <location>
        <begin position="297"/>
        <end position="317"/>
    </location>
</feature>
<feature type="transmembrane region" description="Helical" evidence="1">
    <location>
        <begin position="362"/>
        <end position="382"/>
    </location>
</feature>
<feature type="transmembrane region" description="Helical" evidence="1">
    <location>
        <begin position="397"/>
        <end position="417"/>
    </location>
</feature>
<feature type="transmembrane region" description="Helical" evidence="1">
    <location>
        <begin position="444"/>
        <end position="464"/>
    </location>
</feature>
<feature type="transmembrane region" description="Helical" evidence="1">
    <location>
        <begin position="472"/>
        <end position="492"/>
    </location>
</feature>
<feature type="sequence conflict" description="In Ref. 2; AAH85429." evidence="2" ref="2">
    <original>V</original>
    <variation>A</variation>
    <location>
        <position position="43"/>
    </location>
</feature>
<feature type="sequence conflict" description="In Ref. 2; AAH85429." evidence="2" ref="2">
    <original>F</original>
    <variation>L</variation>
    <location>
        <position position="111"/>
    </location>
</feature>
<feature type="sequence conflict" description="In Ref. 2; AAH85429." evidence="2" ref="2">
    <original>V</original>
    <variation>A</variation>
    <location>
        <position position="119"/>
    </location>
</feature>